<name>GATB_THISH</name>
<dbReference type="EC" id="6.3.5.-" evidence="1"/>
<dbReference type="EMBL" id="CP001339">
    <property type="protein sequence ID" value="ACL71614.1"/>
    <property type="molecule type" value="Genomic_DNA"/>
</dbReference>
<dbReference type="RefSeq" id="WP_012637102.1">
    <property type="nucleotide sequence ID" value="NC_011901.1"/>
</dbReference>
<dbReference type="SMR" id="B8GL96"/>
<dbReference type="STRING" id="396588.Tgr7_0517"/>
<dbReference type="KEGG" id="tgr:Tgr7_0517"/>
<dbReference type="eggNOG" id="COG0064">
    <property type="taxonomic scope" value="Bacteria"/>
</dbReference>
<dbReference type="HOGENOM" id="CLU_019240_0_0_6"/>
<dbReference type="OrthoDB" id="9804078at2"/>
<dbReference type="Proteomes" id="UP000002383">
    <property type="component" value="Chromosome"/>
</dbReference>
<dbReference type="GO" id="GO:0050566">
    <property type="term" value="F:asparaginyl-tRNA synthase (glutamine-hydrolyzing) activity"/>
    <property type="evidence" value="ECO:0007669"/>
    <property type="project" value="RHEA"/>
</dbReference>
<dbReference type="GO" id="GO:0005524">
    <property type="term" value="F:ATP binding"/>
    <property type="evidence" value="ECO:0007669"/>
    <property type="project" value="UniProtKB-KW"/>
</dbReference>
<dbReference type="GO" id="GO:0050567">
    <property type="term" value="F:glutaminyl-tRNA synthase (glutamine-hydrolyzing) activity"/>
    <property type="evidence" value="ECO:0007669"/>
    <property type="project" value="UniProtKB-UniRule"/>
</dbReference>
<dbReference type="GO" id="GO:0070681">
    <property type="term" value="P:glutaminyl-tRNAGln biosynthesis via transamidation"/>
    <property type="evidence" value="ECO:0007669"/>
    <property type="project" value="TreeGrafter"/>
</dbReference>
<dbReference type="GO" id="GO:0006412">
    <property type="term" value="P:translation"/>
    <property type="evidence" value="ECO:0007669"/>
    <property type="project" value="UniProtKB-UniRule"/>
</dbReference>
<dbReference type="FunFam" id="1.10.10.410:FF:000001">
    <property type="entry name" value="Aspartyl/glutamyl-tRNA(Asn/Gln) amidotransferase subunit B"/>
    <property type="match status" value="1"/>
</dbReference>
<dbReference type="FunFam" id="1.10.150.380:FF:000001">
    <property type="entry name" value="Aspartyl/glutamyl-tRNA(Asn/Gln) amidotransferase subunit B"/>
    <property type="match status" value="1"/>
</dbReference>
<dbReference type="Gene3D" id="1.10.10.410">
    <property type="match status" value="1"/>
</dbReference>
<dbReference type="Gene3D" id="1.10.150.380">
    <property type="entry name" value="GatB domain, N-terminal subdomain"/>
    <property type="match status" value="1"/>
</dbReference>
<dbReference type="HAMAP" id="MF_00121">
    <property type="entry name" value="GatB"/>
    <property type="match status" value="1"/>
</dbReference>
<dbReference type="InterPro" id="IPR017959">
    <property type="entry name" value="Asn/Gln-tRNA_amidoTrfase_suB/E"/>
</dbReference>
<dbReference type="InterPro" id="IPR006075">
    <property type="entry name" value="Asn/Gln-tRNA_Trfase_suB/E_cat"/>
</dbReference>
<dbReference type="InterPro" id="IPR018027">
    <property type="entry name" value="Asn/Gln_amidotransferase"/>
</dbReference>
<dbReference type="InterPro" id="IPR003789">
    <property type="entry name" value="Asn/Gln_tRNA_amidoTrase-B-like"/>
</dbReference>
<dbReference type="InterPro" id="IPR004413">
    <property type="entry name" value="GatB"/>
</dbReference>
<dbReference type="InterPro" id="IPR042114">
    <property type="entry name" value="GatB_C_1"/>
</dbReference>
<dbReference type="InterPro" id="IPR023168">
    <property type="entry name" value="GatB_Yqey_C_2"/>
</dbReference>
<dbReference type="InterPro" id="IPR017958">
    <property type="entry name" value="Gln-tRNA_amidoTrfase_suB_CS"/>
</dbReference>
<dbReference type="InterPro" id="IPR014746">
    <property type="entry name" value="Gln_synth/guanido_kin_cat_dom"/>
</dbReference>
<dbReference type="NCBIfam" id="TIGR00133">
    <property type="entry name" value="gatB"/>
    <property type="match status" value="1"/>
</dbReference>
<dbReference type="NCBIfam" id="NF004012">
    <property type="entry name" value="PRK05477.1-2"/>
    <property type="match status" value="1"/>
</dbReference>
<dbReference type="NCBIfam" id="NF004014">
    <property type="entry name" value="PRK05477.1-4"/>
    <property type="match status" value="1"/>
</dbReference>
<dbReference type="NCBIfam" id="NF004015">
    <property type="entry name" value="PRK05477.1-5"/>
    <property type="match status" value="1"/>
</dbReference>
<dbReference type="PANTHER" id="PTHR11659">
    <property type="entry name" value="GLUTAMYL-TRNA GLN AMIDOTRANSFERASE SUBUNIT B MITOCHONDRIAL AND PROKARYOTIC PET112-RELATED"/>
    <property type="match status" value="1"/>
</dbReference>
<dbReference type="PANTHER" id="PTHR11659:SF0">
    <property type="entry name" value="GLUTAMYL-TRNA(GLN) AMIDOTRANSFERASE SUBUNIT B, MITOCHONDRIAL"/>
    <property type="match status" value="1"/>
</dbReference>
<dbReference type="Pfam" id="PF02934">
    <property type="entry name" value="GatB_N"/>
    <property type="match status" value="1"/>
</dbReference>
<dbReference type="Pfam" id="PF02637">
    <property type="entry name" value="GatB_Yqey"/>
    <property type="match status" value="1"/>
</dbReference>
<dbReference type="SMART" id="SM00845">
    <property type="entry name" value="GatB_Yqey"/>
    <property type="match status" value="1"/>
</dbReference>
<dbReference type="SUPFAM" id="SSF89095">
    <property type="entry name" value="GatB/YqeY motif"/>
    <property type="match status" value="1"/>
</dbReference>
<dbReference type="SUPFAM" id="SSF55931">
    <property type="entry name" value="Glutamine synthetase/guanido kinase"/>
    <property type="match status" value="1"/>
</dbReference>
<dbReference type="PROSITE" id="PS01234">
    <property type="entry name" value="GATB"/>
    <property type="match status" value="1"/>
</dbReference>
<gene>
    <name evidence="1" type="primary">gatB</name>
    <name type="ordered locus">Tgr7_0517</name>
</gene>
<reference key="1">
    <citation type="journal article" date="2011" name="Stand. Genomic Sci.">
        <title>Complete genome sequence of 'Thioalkalivibrio sulfidophilus' HL-EbGr7.</title>
        <authorList>
            <person name="Muyzer G."/>
            <person name="Sorokin D.Y."/>
            <person name="Mavromatis K."/>
            <person name="Lapidus A."/>
            <person name="Clum A."/>
            <person name="Ivanova N."/>
            <person name="Pati A."/>
            <person name="d'Haeseleer P."/>
            <person name="Woyke T."/>
            <person name="Kyrpides N.C."/>
        </authorList>
    </citation>
    <scope>NUCLEOTIDE SEQUENCE [LARGE SCALE GENOMIC DNA]</scope>
    <source>
        <strain>HL-EbGR7</strain>
    </source>
</reference>
<keyword id="KW-0067">ATP-binding</keyword>
<keyword id="KW-0436">Ligase</keyword>
<keyword id="KW-0547">Nucleotide-binding</keyword>
<keyword id="KW-0648">Protein biosynthesis</keyword>
<keyword id="KW-1185">Reference proteome</keyword>
<feature type="chain" id="PRO_1000122544" description="Aspartyl/glutamyl-tRNA(Asn/Gln) amidotransferase subunit B">
    <location>
        <begin position="1"/>
        <end position="477"/>
    </location>
</feature>
<proteinExistence type="inferred from homology"/>
<accession>B8GL96</accession>
<sequence length="477" mass="52377">MEWETVIGLEVHAQLATKSKIFSGASTAYGAAPNSQACAIDLGLPGVLPVLNREAVRMAVKFGLAIGAEISPRSVFARKNYFYPDLPKGYQISQYELPVVGLGKLEIELEDGETKVIGITRAHLEEDAGKSLHEDFHGMSGIDLNRAGTPLLEIVSEPDMRSAKEAVAYLKKLHALVRYLEICDGNMQEGSFRCDANVSVRRKGTEKFGTRAEIKNINSFRFVERAINYEVERQIDILEGGGAVVQETRLYDPDKGETRSMRSKEEANDYRYFPDPDLLPLEIDASFIEGVRGTLPELPDEKKHRFMTHYGLSAYDAGVLTASREMGDYYEAVVKACGGHAKLAANWVMGELSAALNKDNREITESPVSAAALGQMLERIEDNTISGKIAKDVFEAMWNGEGSADAVIEKKGLKQITDTGAIEAIIDKVMADNPGQLEQYRSGKDKLFGFFVGQVMKATGGKANPGQVNDLLKKKLQ</sequence>
<evidence type="ECO:0000255" key="1">
    <source>
        <dbReference type="HAMAP-Rule" id="MF_00121"/>
    </source>
</evidence>
<protein>
    <recommendedName>
        <fullName evidence="1">Aspartyl/glutamyl-tRNA(Asn/Gln) amidotransferase subunit B</fullName>
        <shortName evidence="1">Asp/Glu-ADT subunit B</shortName>
        <ecNumber evidence="1">6.3.5.-</ecNumber>
    </recommendedName>
</protein>
<comment type="function">
    <text evidence="1">Allows the formation of correctly charged Asn-tRNA(Asn) or Gln-tRNA(Gln) through the transamidation of misacylated Asp-tRNA(Asn) or Glu-tRNA(Gln) in organisms which lack either or both of asparaginyl-tRNA or glutaminyl-tRNA synthetases. The reaction takes place in the presence of glutamine and ATP through an activated phospho-Asp-tRNA(Asn) or phospho-Glu-tRNA(Gln).</text>
</comment>
<comment type="catalytic activity">
    <reaction evidence="1">
        <text>L-glutamyl-tRNA(Gln) + L-glutamine + ATP + H2O = L-glutaminyl-tRNA(Gln) + L-glutamate + ADP + phosphate + H(+)</text>
        <dbReference type="Rhea" id="RHEA:17521"/>
        <dbReference type="Rhea" id="RHEA-COMP:9681"/>
        <dbReference type="Rhea" id="RHEA-COMP:9684"/>
        <dbReference type="ChEBI" id="CHEBI:15377"/>
        <dbReference type="ChEBI" id="CHEBI:15378"/>
        <dbReference type="ChEBI" id="CHEBI:29985"/>
        <dbReference type="ChEBI" id="CHEBI:30616"/>
        <dbReference type="ChEBI" id="CHEBI:43474"/>
        <dbReference type="ChEBI" id="CHEBI:58359"/>
        <dbReference type="ChEBI" id="CHEBI:78520"/>
        <dbReference type="ChEBI" id="CHEBI:78521"/>
        <dbReference type="ChEBI" id="CHEBI:456216"/>
    </reaction>
</comment>
<comment type="catalytic activity">
    <reaction evidence="1">
        <text>L-aspartyl-tRNA(Asn) + L-glutamine + ATP + H2O = L-asparaginyl-tRNA(Asn) + L-glutamate + ADP + phosphate + 2 H(+)</text>
        <dbReference type="Rhea" id="RHEA:14513"/>
        <dbReference type="Rhea" id="RHEA-COMP:9674"/>
        <dbReference type="Rhea" id="RHEA-COMP:9677"/>
        <dbReference type="ChEBI" id="CHEBI:15377"/>
        <dbReference type="ChEBI" id="CHEBI:15378"/>
        <dbReference type="ChEBI" id="CHEBI:29985"/>
        <dbReference type="ChEBI" id="CHEBI:30616"/>
        <dbReference type="ChEBI" id="CHEBI:43474"/>
        <dbReference type="ChEBI" id="CHEBI:58359"/>
        <dbReference type="ChEBI" id="CHEBI:78515"/>
        <dbReference type="ChEBI" id="CHEBI:78516"/>
        <dbReference type="ChEBI" id="CHEBI:456216"/>
    </reaction>
</comment>
<comment type="subunit">
    <text evidence="1">Heterotrimer of A, B and C subunits.</text>
</comment>
<comment type="similarity">
    <text evidence="1">Belongs to the GatB/GatE family. GatB subfamily.</text>
</comment>
<organism>
    <name type="scientific">Thioalkalivibrio sulfidiphilus (strain HL-EbGR7)</name>
    <dbReference type="NCBI Taxonomy" id="396588"/>
    <lineage>
        <taxon>Bacteria</taxon>
        <taxon>Pseudomonadati</taxon>
        <taxon>Pseudomonadota</taxon>
        <taxon>Gammaproteobacteria</taxon>
        <taxon>Chromatiales</taxon>
        <taxon>Ectothiorhodospiraceae</taxon>
        <taxon>Thioalkalivibrio</taxon>
    </lineage>
</organism>